<sequence>MIYKVLYQKDKIVNPRRETTQTLYMEADNIVQARALVEQNTPYNIELIQELTGNSLKYEQEHADFKLTAFGQTNSED</sequence>
<organism>
    <name type="scientific">Lactobacillus delbrueckii subsp. bulgaricus (strain ATCC 11842 / DSM 20081 / BCRC 10696 / JCM 1002 / NBRC 13953 / NCIMB 11778 / NCTC 12712 / WDCM 00102 / Lb 14)</name>
    <dbReference type="NCBI Taxonomy" id="390333"/>
    <lineage>
        <taxon>Bacteria</taxon>
        <taxon>Bacillati</taxon>
        <taxon>Bacillota</taxon>
        <taxon>Bacilli</taxon>
        <taxon>Lactobacillales</taxon>
        <taxon>Lactobacillaceae</taxon>
        <taxon>Lactobacillus</taxon>
    </lineage>
</organism>
<dbReference type="EC" id="2.7.7.6" evidence="1"/>
<dbReference type="EMBL" id="CR954253">
    <property type="protein sequence ID" value="CAI97588.1"/>
    <property type="molecule type" value="Genomic_DNA"/>
</dbReference>
<dbReference type="RefSeq" id="WP_002879098.1">
    <property type="nucleotide sequence ID" value="NZ_JQAV01000001.1"/>
</dbReference>
<dbReference type="SMR" id="Q1GAR5"/>
<dbReference type="STRING" id="390333.Ldb0761"/>
<dbReference type="KEGG" id="ldb:Ldb0761"/>
<dbReference type="PATRIC" id="fig|390333.13.peg.38"/>
<dbReference type="eggNOG" id="COG5503">
    <property type="taxonomic scope" value="Bacteria"/>
</dbReference>
<dbReference type="HOGENOM" id="CLU_187518_0_0_9"/>
<dbReference type="BioCyc" id="LDEL390333:LDB_RS03350-MONOMER"/>
<dbReference type="Proteomes" id="UP000001259">
    <property type="component" value="Chromosome"/>
</dbReference>
<dbReference type="GO" id="GO:0000428">
    <property type="term" value="C:DNA-directed RNA polymerase complex"/>
    <property type="evidence" value="ECO:0007669"/>
    <property type="project" value="UniProtKB-KW"/>
</dbReference>
<dbReference type="GO" id="GO:0003677">
    <property type="term" value="F:DNA binding"/>
    <property type="evidence" value="ECO:0007669"/>
    <property type="project" value="UniProtKB-UniRule"/>
</dbReference>
<dbReference type="GO" id="GO:0003899">
    <property type="term" value="F:DNA-directed RNA polymerase activity"/>
    <property type="evidence" value="ECO:0007669"/>
    <property type="project" value="UniProtKB-UniRule"/>
</dbReference>
<dbReference type="GO" id="GO:0006351">
    <property type="term" value="P:DNA-templated transcription"/>
    <property type="evidence" value="ECO:0007669"/>
    <property type="project" value="UniProtKB-UniRule"/>
</dbReference>
<dbReference type="Gene3D" id="3.10.20.730">
    <property type="entry name" value="RNAP, epsilon subunit-like"/>
    <property type="match status" value="1"/>
</dbReference>
<dbReference type="HAMAP" id="MF_01553">
    <property type="entry name" value="RNApol_bact_RpoY"/>
    <property type="match status" value="1"/>
</dbReference>
<dbReference type="InterPro" id="IPR009907">
    <property type="entry name" value="RpoY"/>
</dbReference>
<dbReference type="NCBIfam" id="NF010188">
    <property type="entry name" value="PRK13667.1"/>
    <property type="match status" value="1"/>
</dbReference>
<dbReference type="Pfam" id="PF07288">
    <property type="entry name" value="RpoY"/>
    <property type="match status" value="1"/>
</dbReference>
<protein>
    <recommendedName>
        <fullName evidence="1">DNA-directed RNA polymerase subunit epsilon</fullName>
        <shortName evidence="1">RNAP epsilon subunit</shortName>
        <ecNumber evidence="1">2.7.7.6</ecNumber>
    </recommendedName>
    <alternativeName>
        <fullName evidence="1">RNA polymerase epsilon subunit</fullName>
    </alternativeName>
    <alternativeName>
        <fullName evidence="1">Transcriptase subunit epsilon</fullName>
    </alternativeName>
</protein>
<keyword id="KW-0240">DNA-directed RNA polymerase</keyword>
<keyword id="KW-0548">Nucleotidyltransferase</keyword>
<keyword id="KW-1185">Reference proteome</keyword>
<keyword id="KW-0804">Transcription</keyword>
<keyword id="KW-0808">Transferase</keyword>
<name>RPOY_LACDA</name>
<proteinExistence type="inferred from homology"/>
<comment type="function">
    <text evidence="1">A non-essential component of RNA polymerase (RNAP).</text>
</comment>
<comment type="catalytic activity">
    <reaction evidence="1">
        <text>RNA(n) + a ribonucleoside 5'-triphosphate = RNA(n+1) + diphosphate</text>
        <dbReference type="Rhea" id="RHEA:21248"/>
        <dbReference type="Rhea" id="RHEA-COMP:14527"/>
        <dbReference type="Rhea" id="RHEA-COMP:17342"/>
        <dbReference type="ChEBI" id="CHEBI:33019"/>
        <dbReference type="ChEBI" id="CHEBI:61557"/>
        <dbReference type="ChEBI" id="CHEBI:140395"/>
        <dbReference type="EC" id="2.7.7.6"/>
    </reaction>
</comment>
<comment type="subunit">
    <text evidence="1">RNAP is composed of a core of 2 alpha, a beta and a beta' subunit. The core is associated with a delta subunit, and at least one of epsilon or omega. When a sigma factor is associated with the core the holoenzyme is formed, which can initiate transcription.</text>
</comment>
<comment type="similarity">
    <text evidence="1">Belongs to the RNA polymerase subunit epsilon family.</text>
</comment>
<reference key="1">
    <citation type="journal article" date="2006" name="Proc. Natl. Acad. Sci. U.S.A.">
        <title>The complete genome sequence of Lactobacillus bulgaricus reveals extensive and ongoing reductive evolution.</title>
        <authorList>
            <person name="van de Guchte M."/>
            <person name="Penaud S."/>
            <person name="Grimaldi C."/>
            <person name="Barbe V."/>
            <person name="Bryson K."/>
            <person name="Nicolas P."/>
            <person name="Robert C."/>
            <person name="Oztas S."/>
            <person name="Mangenot S."/>
            <person name="Couloux A."/>
            <person name="Loux V."/>
            <person name="Dervyn R."/>
            <person name="Bossy R."/>
            <person name="Bolotin A."/>
            <person name="Batto J.-M."/>
            <person name="Walunas T."/>
            <person name="Gibrat J.-F."/>
            <person name="Bessieres P."/>
            <person name="Weissenbach J."/>
            <person name="Ehrlich S.D."/>
            <person name="Maguin E."/>
        </authorList>
    </citation>
    <scope>NUCLEOTIDE SEQUENCE [LARGE SCALE GENOMIC DNA]</scope>
    <source>
        <strain>ATCC 11842 / DSM 20081 / BCRC 10696 / JCM 1002 / NBRC 13953 / NCIMB 11778 / NCTC 12712 / WDCM 00102 / Lb 14</strain>
    </source>
</reference>
<feature type="chain" id="PRO_1000068868" description="DNA-directed RNA polymerase subunit epsilon">
    <location>
        <begin position="1"/>
        <end position="77"/>
    </location>
</feature>
<gene>
    <name evidence="1" type="primary">rpoY</name>
    <name type="ordered locus">Ldb0761</name>
</gene>
<accession>Q1GAR5</accession>
<evidence type="ECO:0000255" key="1">
    <source>
        <dbReference type="HAMAP-Rule" id="MF_01553"/>
    </source>
</evidence>